<dbReference type="EMBL" id="U20254">
    <property type="protein sequence ID" value="AAC49577.1"/>
    <property type="molecule type" value="Genomic_DNA"/>
</dbReference>
<dbReference type="EMBL" id="AB002531">
    <property type="protein sequence ID" value="BAA19568.1"/>
    <property type="molecule type" value="Genomic_DNA"/>
</dbReference>
<dbReference type="EMBL" id="AY949949">
    <property type="protein sequence ID" value="AAY27351.1"/>
    <property type="molecule type" value="Genomic_DNA"/>
</dbReference>
<dbReference type="EMBL" id="AY949950">
    <property type="protein sequence ID" value="AAY27352.1"/>
    <property type="molecule type" value="Genomic_DNA"/>
</dbReference>
<dbReference type="EMBL" id="AY949951">
    <property type="protein sequence ID" value="AAY27353.1"/>
    <property type="molecule type" value="Genomic_DNA"/>
</dbReference>
<dbReference type="EMBL" id="AY949952">
    <property type="protein sequence ID" value="AAY27354.1"/>
    <property type="molecule type" value="Genomic_DNA"/>
</dbReference>
<dbReference type="EMBL" id="AY949953">
    <property type="protein sequence ID" value="AAY27355.1"/>
    <property type="molecule type" value="Genomic_DNA"/>
</dbReference>
<dbReference type="EMBL" id="AY949954">
    <property type="protein sequence ID" value="AAY27356.1"/>
    <property type="molecule type" value="Genomic_DNA"/>
</dbReference>
<dbReference type="EMBL" id="AY949955">
    <property type="protein sequence ID" value="AAY27357.1"/>
    <property type="molecule type" value="Genomic_DNA"/>
</dbReference>
<dbReference type="EMBL" id="AY949956">
    <property type="protein sequence ID" value="AAY27358.1"/>
    <property type="molecule type" value="Genomic_DNA"/>
</dbReference>
<dbReference type="EMBL" id="AY949957">
    <property type="protein sequence ID" value="AAY27359.1"/>
    <property type="molecule type" value="Genomic_DNA"/>
</dbReference>
<dbReference type="EMBL" id="AY949958">
    <property type="protein sequence ID" value="AAY27360.1"/>
    <property type="molecule type" value="Genomic_DNA"/>
</dbReference>
<dbReference type="EMBL" id="AY949959">
    <property type="protein sequence ID" value="AAY27361.1"/>
    <property type="molecule type" value="Genomic_DNA"/>
</dbReference>
<dbReference type="EMBL" id="AY949960">
    <property type="protein sequence ID" value="AAY27362.1"/>
    <property type="molecule type" value="Genomic_DNA"/>
</dbReference>
<dbReference type="EMBL" id="AY949961">
    <property type="protein sequence ID" value="AAY27363.1"/>
    <property type="molecule type" value="Genomic_DNA"/>
</dbReference>
<dbReference type="EMBL" id="AY949962">
    <property type="protein sequence ID" value="AAY27364.1"/>
    <property type="molecule type" value="Genomic_DNA"/>
</dbReference>
<dbReference type="EMBL" id="AY949963">
    <property type="protein sequence ID" value="AAY27365.1"/>
    <property type="molecule type" value="Genomic_DNA"/>
</dbReference>
<dbReference type="EMBL" id="AY949964">
    <property type="protein sequence ID" value="AAY27366.1"/>
    <property type="molecule type" value="Genomic_DNA"/>
</dbReference>
<dbReference type="EMBL" id="AY949965">
    <property type="protein sequence ID" value="AAY27367.1"/>
    <property type="molecule type" value="Genomic_DNA"/>
</dbReference>
<dbReference type="EMBL" id="AY949966">
    <property type="protein sequence ID" value="AAY27368.1"/>
    <property type="molecule type" value="Genomic_DNA"/>
</dbReference>
<dbReference type="EMBL" id="AY949967">
    <property type="protein sequence ID" value="AAY27369.1"/>
    <property type="molecule type" value="Genomic_DNA"/>
</dbReference>
<dbReference type="EMBL" id="AY949968">
    <property type="protein sequence ID" value="AAY27370.1"/>
    <property type="molecule type" value="Genomic_DNA"/>
</dbReference>
<dbReference type="EMBL" id="AY949969">
    <property type="protein sequence ID" value="AAY27371.1"/>
    <property type="molecule type" value="Genomic_DNA"/>
</dbReference>
<dbReference type="EMBL" id="AY949970">
    <property type="protein sequence ID" value="AAY27372.1"/>
    <property type="molecule type" value="Genomic_DNA"/>
</dbReference>
<dbReference type="EMBL" id="AY949971">
    <property type="protein sequence ID" value="AAY27373.1"/>
    <property type="molecule type" value="Genomic_DNA"/>
</dbReference>
<dbReference type="EMBL" id="AY949972">
    <property type="protein sequence ID" value="AAY27374.1"/>
    <property type="molecule type" value="Genomic_DNA"/>
</dbReference>
<dbReference type="EMBL" id="AY949973">
    <property type="protein sequence ID" value="AAY27375.1"/>
    <property type="molecule type" value="Genomic_DNA"/>
</dbReference>
<dbReference type="EMBL" id="AY949974">
    <property type="protein sequence ID" value="AAY27376.1"/>
    <property type="molecule type" value="Genomic_DNA"/>
</dbReference>
<dbReference type="EMBL" id="AY949975">
    <property type="protein sequence ID" value="AAY27377.1"/>
    <property type="molecule type" value="Genomic_DNA"/>
</dbReference>
<dbReference type="EMBL" id="AY949976">
    <property type="protein sequence ID" value="AAY27378.1"/>
    <property type="molecule type" value="Genomic_DNA"/>
</dbReference>
<dbReference type="EMBL" id="AY949977">
    <property type="protein sequence ID" value="AAY27379.1"/>
    <property type="molecule type" value="Genomic_DNA"/>
</dbReference>
<dbReference type="EMBL" id="U43281">
    <property type="protein sequence ID" value="AAB68207.1"/>
    <property type="molecule type" value="Genomic_DNA"/>
</dbReference>
<dbReference type="EMBL" id="AY693225">
    <property type="protein sequence ID" value="AAT93244.1"/>
    <property type="molecule type" value="Genomic_DNA"/>
</dbReference>
<dbReference type="EMBL" id="AJ458365">
    <property type="protein sequence ID" value="CAD30223.1"/>
    <property type="molecule type" value="Genomic_DNA"/>
</dbReference>
<dbReference type="EMBL" id="AJ458367">
    <property type="protein sequence ID" value="CAD30225.1"/>
    <property type="molecule type" value="Genomic_DNA"/>
</dbReference>
<dbReference type="EMBL" id="BK006949">
    <property type="protein sequence ID" value="DAA11341.1"/>
    <property type="molecule type" value="Genomic_DNA"/>
</dbReference>
<dbReference type="PIR" id="S61974">
    <property type="entry name" value="S61974"/>
</dbReference>
<dbReference type="RefSeq" id="NP_015233.1">
    <property type="nucleotide sequence ID" value="NM_001183906.1"/>
</dbReference>
<dbReference type="BioGRID" id="36089">
    <property type="interactions" value="42"/>
</dbReference>
<dbReference type="DIP" id="DIP-5056N"/>
<dbReference type="FunCoup" id="P41930">
    <property type="interactions" value="91"/>
</dbReference>
<dbReference type="IntAct" id="P41930">
    <property type="interactions" value="1"/>
</dbReference>
<dbReference type="MINT" id="P41930"/>
<dbReference type="STRING" id="4932.YPL092W"/>
<dbReference type="TCDB" id="2.A.16.3.1">
    <property type="family name" value="the telurite-resistance/dicarboxylate transporter (tdt) family"/>
</dbReference>
<dbReference type="iPTMnet" id="P41930"/>
<dbReference type="PaxDb" id="4932-YPL092W"/>
<dbReference type="PeptideAtlas" id="P41930"/>
<dbReference type="DNASU" id="856013"/>
<dbReference type="EnsemblFungi" id="YPL092W_mRNA">
    <property type="protein sequence ID" value="YPL092W"/>
    <property type="gene ID" value="YPL092W"/>
</dbReference>
<dbReference type="GeneID" id="856013"/>
<dbReference type="KEGG" id="sce:YPL092W"/>
<dbReference type="AGR" id="SGD:S000006013"/>
<dbReference type="SGD" id="S000006013">
    <property type="gene designation" value="SSU1"/>
</dbReference>
<dbReference type="VEuPathDB" id="FungiDB:YPL092W"/>
<dbReference type="eggNOG" id="ENOG502QT02">
    <property type="taxonomic scope" value="Eukaryota"/>
</dbReference>
<dbReference type="HOGENOM" id="CLU_030057_6_2_1"/>
<dbReference type="InParanoid" id="P41930"/>
<dbReference type="OMA" id="LGPNWYA"/>
<dbReference type="OrthoDB" id="1099at2759"/>
<dbReference type="BioCyc" id="YEAST:G3O-33996-MONOMER"/>
<dbReference type="BioGRID-ORCS" id="856013">
    <property type="hits" value="0 hits in 10 CRISPR screens"/>
</dbReference>
<dbReference type="PRO" id="PR:P41930"/>
<dbReference type="Proteomes" id="UP000002311">
    <property type="component" value="Chromosome XVI"/>
</dbReference>
<dbReference type="RNAct" id="P41930">
    <property type="molecule type" value="protein"/>
</dbReference>
<dbReference type="GO" id="GO:0071944">
    <property type="term" value="C:cell periphery"/>
    <property type="evidence" value="ECO:0007005"/>
    <property type="project" value="SGD"/>
</dbReference>
<dbReference type="GO" id="GO:0005783">
    <property type="term" value="C:endoplasmic reticulum"/>
    <property type="evidence" value="ECO:0007005"/>
    <property type="project" value="SGD"/>
</dbReference>
<dbReference type="GO" id="GO:0005886">
    <property type="term" value="C:plasma membrane"/>
    <property type="evidence" value="ECO:0000314"/>
    <property type="project" value="SGD"/>
</dbReference>
<dbReference type="GO" id="GO:0000319">
    <property type="term" value="F:sulfite transmembrane transporter activity"/>
    <property type="evidence" value="ECO:0000314"/>
    <property type="project" value="SGD"/>
</dbReference>
<dbReference type="GO" id="GO:0000316">
    <property type="term" value="P:sulfite transmembrane transport"/>
    <property type="evidence" value="ECO:0000314"/>
    <property type="project" value="SGD"/>
</dbReference>
<dbReference type="CDD" id="cd09318">
    <property type="entry name" value="TDT_SSU1"/>
    <property type="match status" value="1"/>
</dbReference>
<dbReference type="FunFam" id="1.50.10.150:FF:000007">
    <property type="entry name" value="Sulfite efflux pump SSU1"/>
    <property type="match status" value="1"/>
</dbReference>
<dbReference type="Gene3D" id="1.50.10.150">
    <property type="entry name" value="Voltage-dependent anion channel"/>
    <property type="match status" value="1"/>
</dbReference>
<dbReference type="InterPro" id="IPR004695">
    <property type="entry name" value="SLAC1/Mae1/Ssu1/TehA"/>
</dbReference>
<dbReference type="InterPro" id="IPR051629">
    <property type="entry name" value="Sulfite_efflux_TDT"/>
</dbReference>
<dbReference type="InterPro" id="IPR038665">
    <property type="entry name" value="Voltage-dep_anion_channel_sf"/>
</dbReference>
<dbReference type="PANTHER" id="PTHR31686">
    <property type="match status" value="1"/>
</dbReference>
<dbReference type="PANTHER" id="PTHR31686:SF1">
    <property type="entry name" value="SULFITE EFFLUX PUMP SSU1"/>
    <property type="match status" value="1"/>
</dbReference>
<dbReference type="Pfam" id="PF03595">
    <property type="entry name" value="SLAC1"/>
    <property type="match status" value="1"/>
</dbReference>
<proteinExistence type="evidence at protein level"/>
<comment type="function">
    <text evidence="2 3">Involved in efflux of free sulfite. Mutations in the SSU1 gene cause sensitivity to sulfite.</text>
</comment>
<comment type="subcellular location">
    <subcellularLocation>
        <location evidence="4">Cell membrane</location>
        <topology evidence="4">Multi-pass membrane protein</topology>
    </subcellularLocation>
</comment>
<comment type="similarity">
    <text evidence="5">Belongs to the tellurite-resistance/dicarboxylate transporter (TDT) family.</text>
</comment>
<protein>
    <recommendedName>
        <fullName>Sulfite efflux pump SSU1</fullName>
    </recommendedName>
    <alternativeName>
        <fullName>Sulfite sensitivity protein SSU1</fullName>
    </alternativeName>
</protein>
<name>SSU1_YEAST</name>
<organism>
    <name type="scientific">Saccharomyces cerevisiae (strain ATCC 204508 / S288c)</name>
    <name type="common">Baker's yeast</name>
    <dbReference type="NCBI Taxonomy" id="559292"/>
    <lineage>
        <taxon>Eukaryota</taxon>
        <taxon>Fungi</taxon>
        <taxon>Dikarya</taxon>
        <taxon>Ascomycota</taxon>
        <taxon>Saccharomycotina</taxon>
        <taxon>Saccharomycetes</taxon>
        <taxon>Saccharomycetales</taxon>
        <taxon>Saccharomycetaceae</taxon>
        <taxon>Saccharomyces</taxon>
    </lineage>
</organism>
<reference key="1">
    <citation type="journal article" date="1997" name="J. Bacteriol.">
        <title>SSU1 encodes a plasma membrane protein with a central role in a network of proteins conferring sulfite tolerance in Saccharomyces cerevisiae.</title>
        <authorList>
            <person name="Avram D."/>
            <person name="Bakalinsky A.T."/>
        </authorList>
    </citation>
    <scope>NUCLEOTIDE SEQUENCE [GENOMIC DNA]</scope>
    <scope>SUBCELLULAR LOCATION</scope>
    <scope>NULL MUTANT</scope>
    <source>
        <strain>S288c / YPH1</strain>
    </source>
</reference>
<reference key="2">
    <citation type="journal article" date="1998" name="J. Ferment. Bioeng.">
        <title>SSU1-R, a sulfite resistance gene of wine yeast, is an allele of SSU1 with a different upstream sequence.</title>
        <authorList>
            <person name="Goto-Yamamoto N."/>
            <person name="Kitano K."/>
            <person name="Shiki K."/>
            <person name="Yoshida Y."/>
            <person name="Suzuki T."/>
            <person name="Iwata T."/>
            <person name="Yamane Y."/>
            <person name="Hara S."/>
        </authorList>
    </citation>
    <scope>NUCLEOTIDE SEQUENCE [GENOMIC DNA]</scope>
    <source>
        <strain>Y-9</strain>
    </source>
</reference>
<reference key="3">
    <citation type="journal article" date="2006" name="FEMS Yeast Res.">
        <title>Population structure and gene evolution in Saccharomyces cerevisiae.</title>
        <authorList>
            <person name="Aa E."/>
            <person name="Townsend J.P."/>
            <person name="Adams R.I."/>
            <person name="Nielsen K.M."/>
            <person name="Taylor J.W."/>
        </authorList>
    </citation>
    <scope>NUCLEOTIDE SEQUENCE [GENOMIC DNA]</scope>
    <source>
        <strain>ATCC 76625 / YPH499</strain>
        <strain>Ba194</strain>
        <strain>Bb32</strain>
        <strain>Fy93</strain>
        <strain>M1-2A</strain>
        <strain>M2-8</strain>
        <strain>M5-7A</strain>
        <strain>M5-7B</strain>
        <strain>M7-8D</strain>
        <strain>MMR2-1</strain>
        <strain>MMR2-3</strain>
        <strain>MMR2-5</strain>
        <strain>MMW1-12</strain>
        <strain>MMW1-15</strain>
        <strain>MMW1-15h2</strain>
        <strain>MMW1-2</strain>
        <strain>MMW1-2h2</strain>
        <strain>ORM1-1</strain>
        <strain>Sgu52E</strain>
        <strain>Sgu52F</strain>
        <strain>YPS396</strain>
        <strain>YPS400</strain>
        <strain>YPS598</strain>
        <strain>YPS600</strain>
        <strain>YPS602</strain>
        <strain>YPS604</strain>
        <strain>YPS606</strain>
        <strain>YPS608</strain>
        <strain>YPS610</strain>
    </source>
</reference>
<reference key="4">
    <citation type="journal article" date="1997" name="Nature">
        <title>The nucleotide sequence of Saccharomyces cerevisiae chromosome XVI.</title>
        <authorList>
            <person name="Bussey H."/>
            <person name="Storms R.K."/>
            <person name="Ahmed A."/>
            <person name="Albermann K."/>
            <person name="Allen E."/>
            <person name="Ansorge W."/>
            <person name="Araujo R."/>
            <person name="Aparicio A."/>
            <person name="Barrell B.G."/>
            <person name="Badcock K."/>
            <person name="Benes V."/>
            <person name="Botstein D."/>
            <person name="Bowman S."/>
            <person name="Brueckner M."/>
            <person name="Carpenter J."/>
            <person name="Cherry J.M."/>
            <person name="Chung E."/>
            <person name="Churcher C.M."/>
            <person name="Coster F."/>
            <person name="Davis K."/>
            <person name="Davis R.W."/>
            <person name="Dietrich F.S."/>
            <person name="Delius H."/>
            <person name="DiPaolo T."/>
            <person name="Dubois E."/>
            <person name="Duesterhoeft A."/>
            <person name="Duncan M."/>
            <person name="Floeth M."/>
            <person name="Fortin N."/>
            <person name="Friesen J.D."/>
            <person name="Fritz C."/>
            <person name="Goffeau A."/>
            <person name="Hall J."/>
            <person name="Hebling U."/>
            <person name="Heumann K."/>
            <person name="Hilbert H."/>
            <person name="Hillier L.W."/>
            <person name="Hunicke-Smith S."/>
            <person name="Hyman R.W."/>
            <person name="Johnston M."/>
            <person name="Kalman S."/>
            <person name="Kleine K."/>
            <person name="Komp C."/>
            <person name="Kurdi O."/>
            <person name="Lashkari D."/>
            <person name="Lew H."/>
            <person name="Lin A."/>
            <person name="Lin D."/>
            <person name="Louis E.J."/>
            <person name="Marathe R."/>
            <person name="Messenguy F."/>
            <person name="Mewes H.-W."/>
            <person name="Mirtipati S."/>
            <person name="Moestl D."/>
            <person name="Mueller-Auer S."/>
            <person name="Namath A."/>
            <person name="Nentwich U."/>
            <person name="Oefner P."/>
            <person name="Pearson D."/>
            <person name="Petel F.X."/>
            <person name="Pohl T.M."/>
            <person name="Purnelle B."/>
            <person name="Rajandream M.A."/>
            <person name="Rechmann S."/>
            <person name="Rieger M."/>
            <person name="Riles L."/>
            <person name="Roberts D."/>
            <person name="Schaefer M."/>
            <person name="Scharfe M."/>
            <person name="Scherens B."/>
            <person name="Schramm S."/>
            <person name="Schroeder M."/>
            <person name="Sdicu A.-M."/>
            <person name="Tettelin H."/>
            <person name="Urrestarazu L.A."/>
            <person name="Ushinsky S."/>
            <person name="Vierendeels F."/>
            <person name="Vissers S."/>
            <person name="Voss H."/>
            <person name="Walsh S.V."/>
            <person name="Wambutt R."/>
            <person name="Wang Y."/>
            <person name="Wedler E."/>
            <person name="Wedler H."/>
            <person name="Winnett E."/>
            <person name="Zhong W.-W."/>
            <person name="Zollner A."/>
            <person name="Vo D.H."/>
            <person name="Hani J."/>
        </authorList>
    </citation>
    <scope>NUCLEOTIDE SEQUENCE [LARGE SCALE GENOMIC DNA]</scope>
    <source>
        <strain>ATCC 204508 / S288c</strain>
    </source>
</reference>
<reference key="5">
    <citation type="journal article" date="2014" name="G3 (Bethesda)">
        <title>The reference genome sequence of Saccharomyces cerevisiae: Then and now.</title>
        <authorList>
            <person name="Engel S.R."/>
            <person name="Dietrich F.S."/>
            <person name="Fisk D.G."/>
            <person name="Binkley G."/>
            <person name="Balakrishnan R."/>
            <person name="Costanzo M.C."/>
            <person name="Dwight S.S."/>
            <person name="Hitz B.C."/>
            <person name="Karra K."/>
            <person name="Nash R.S."/>
            <person name="Weng S."/>
            <person name="Wong E.D."/>
            <person name="Lloyd P."/>
            <person name="Skrzypek M.S."/>
            <person name="Miyasato S.R."/>
            <person name="Simison M."/>
            <person name="Cherry J.M."/>
        </authorList>
    </citation>
    <scope>GENOME REANNOTATION</scope>
    <source>
        <strain>ATCC 204508 / S288c</strain>
    </source>
</reference>
<reference key="6">
    <citation type="journal article" date="2007" name="Genome Res.">
        <title>Approaching a complete repository of sequence-verified protein-encoding clones for Saccharomyces cerevisiae.</title>
        <authorList>
            <person name="Hu Y."/>
            <person name="Rolfs A."/>
            <person name="Bhullar B."/>
            <person name="Murthy T.V.S."/>
            <person name="Zhu C."/>
            <person name="Berger M.F."/>
            <person name="Camargo A.A."/>
            <person name="Kelley F."/>
            <person name="McCarron S."/>
            <person name="Jepson D."/>
            <person name="Richardson A."/>
            <person name="Raphael J."/>
            <person name="Moreira D."/>
            <person name="Taycher E."/>
            <person name="Zuo D."/>
            <person name="Mohr S."/>
            <person name="Kane M.F."/>
            <person name="Williamson J."/>
            <person name="Simpson A.J.G."/>
            <person name="Bulyk M.L."/>
            <person name="Harlow E."/>
            <person name="Marsischky G."/>
            <person name="Kolodner R.D."/>
            <person name="LaBaer J."/>
        </authorList>
    </citation>
    <scope>NUCLEOTIDE SEQUENCE [GENOMIC DNA]</scope>
    <source>
        <strain>ATCC 204508 / S288c</strain>
    </source>
</reference>
<reference key="7">
    <citation type="journal article" date="2002" name="Genome Res.">
        <title>Molecular characterization of a chromosomal rearrangement involved in the adaptive evolution of yeast strains.</title>
        <authorList>
            <person name="Perez-Ortin J.E."/>
            <person name="Querol A."/>
            <person name="Puig S."/>
            <person name="Barrio E."/>
        </authorList>
    </citation>
    <scope>NUCLEOTIDE SEQUENCE [GENOMIC DNA] OF 1-20 (STRAIN CECT 10233)</scope>
    <scope>NUCLEOTIDE SEQUENCE [GENOMIC DNA] OF 1-16 (STRAIN CECT 1485)</scope>
    <source>
        <strain>CECT 10233</strain>
        <strain>CECT 1485</strain>
    </source>
</reference>
<reference key="8">
    <citation type="journal article" date="1994" name="Curr. Genet.">
        <title>Isolation and characterization of sulfite mutants of Saccharomyces cerevisiae.</title>
        <authorList>
            <person name="Xu X."/>
            <person name="Wightman J.D."/>
            <person name="Geller B.L."/>
            <person name="Avram D."/>
            <person name="Bakalinsky A.T."/>
        </authorList>
    </citation>
    <scope>FUNCTION</scope>
</reference>
<reference key="9">
    <citation type="journal article" date="2000" name="Yeast">
        <title>SSU1 mediates sulphite efflux in Saccharomyces cerevisiae.</title>
        <authorList>
            <person name="Park H."/>
            <person name="Bakalinsky A.T."/>
        </authorList>
    </citation>
    <scope>FUNCTION</scope>
</reference>
<reference key="10">
    <citation type="journal article" date="2006" name="Proc. Natl. Acad. Sci. U.S.A.">
        <title>A global topology map of the Saccharomyces cerevisiae membrane proteome.</title>
        <authorList>
            <person name="Kim H."/>
            <person name="Melen K."/>
            <person name="Oesterberg M."/>
            <person name="von Heijne G."/>
        </authorList>
    </citation>
    <scope>TOPOLOGY [LARGE SCALE ANALYSIS]</scope>
    <source>
        <strain>ATCC 208353 / W303-1A</strain>
    </source>
</reference>
<reference key="11">
    <citation type="journal article" date="2008" name="Mol. Cell. Proteomics">
        <title>A multidimensional chromatography technology for in-depth phosphoproteome analysis.</title>
        <authorList>
            <person name="Albuquerque C.P."/>
            <person name="Smolka M.B."/>
            <person name="Payne S.H."/>
            <person name="Bafna V."/>
            <person name="Eng J."/>
            <person name="Zhou H."/>
        </authorList>
    </citation>
    <scope>PHOSPHORYLATION [LARGE SCALE ANALYSIS] AT SER-444; SER-448 AND SER-450</scope>
    <scope>IDENTIFICATION BY MASS SPECTROMETRY [LARGE SCALE ANALYSIS]</scope>
</reference>
<reference key="12">
    <citation type="journal article" date="2009" name="Science">
        <title>Global analysis of Cdk1 substrate phosphorylation sites provides insights into evolution.</title>
        <authorList>
            <person name="Holt L.J."/>
            <person name="Tuch B.B."/>
            <person name="Villen J."/>
            <person name="Johnson A.D."/>
            <person name="Gygi S.P."/>
            <person name="Morgan D.O."/>
        </authorList>
    </citation>
    <scope>PHOSPHORYLATION [LARGE SCALE ANALYSIS] AT SER-444; SER-448 AND SER-450</scope>
    <scope>IDENTIFICATION BY MASS SPECTROMETRY [LARGE SCALE ANALYSIS]</scope>
</reference>
<evidence type="ECO:0000255" key="1"/>
<evidence type="ECO:0000269" key="2">
    <source>
    </source>
</evidence>
<evidence type="ECO:0000269" key="3">
    <source>
    </source>
</evidence>
<evidence type="ECO:0000269" key="4">
    <source>
    </source>
</evidence>
<evidence type="ECO:0000305" key="5"/>
<evidence type="ECO:0007744" key="6">
    <source>
    </source>
</evidence>
<evidence type="ECO:0007744" key="7">
    <source>
    </source>
</evidence>
<accession>P41930</accession>
<accession>D6W3S5</accession>
<accession>P87026</accession>
<accession>Q02893</accession>
<accession>Q2VQ61</accession>
<accession>Q2VQ65</accession>
<accession>Q2VQ70</accession>
<accession>Q2VQ74</accession>
<accession>Q2VQ76</accession>
<accession>Q2VQ77</accession>
<accession>Q8J1R0</accession>
<accession>Q8J1R1</accession>
<gene>
    <name type="primary">SSU1</name>
    <name type="ordered locus">YPL092W</name>
    <name type="ORF">LPG16W</name>
</gene>
<feature type="chain" id="PRO_0000072229" description="Sulfite efflux pump SSU1">
    <location>
        <begin position="1"/>
        <end position="458"/>
    </location>
</feature>
<feature type="topological domain" description="Cytoplasmic" evidence="1">
    <location>
        <begin position="1"/>
        <end position="11"/>
    </location>
</feature>
<feature type="transmembrane region" description="Helical" evidence="1">
    <location>
        <begin position="12"/>
        <end position="32"/>
    </location>
</feature>
<feature type="topological domain" description="Extracellular" evidence="1">
    <location>
        <begin position="33"/>
        <end position="48"/>
    </location>
</feature>
<feature type="transmembrane region" description="Helical" evidence="1">
    <location>
        <begin position="49"/>
        <end position="69"/>
    </location>
</feature>
<feature type="topological domain" description="Cytoplasmic" evidence="1">
    <location>
        <begin position="70"/>
        <end position="89"/>
    </location>
</feature>
<feature type="transmembrane region" description="Helical" evidence="1">
    <location>
        <begin position="90"/>
        <end position="110"/>
    </location>
</feature>
<feature type="topological domain" description="Extracellular" evidence="1">
    <location>
        <begin position="111"/>
        <end position="135"/>
    </location>
</feature>
<feature type="transmembrane region" description="Helical" evidence="1">
    <location>
        <begin position="136"/>
        <end position="156"/>
    </location>
</feature>
<feature type="topological domain" description="Cytoplasmic" evidence="1">
    <location>
        <begin position="157"/>
        <end position="176"/>
    </location>
</feature>
<feature type="transmembrane region" description="Helical" evidence="1">
    <location>
        <begin position="177"/>
        <end position="197"/>
    </location>
</feature>
<feature type="topological domain" description="Extracellular" evidence="1">
    <location>
        <begin position="198"/>
        <end position="220"/>
    </location>
</feature>
<feature type="transmembrane region" description="Helical" evidence="1">
    <location>
        <begin position="221"/>
        <end position="241"/>
    </location>
</feature>
<feature type="topological domain" description="Cytoplasmic" evidence="1">
    <location>
        <begin position="242"/>
        <end position="252"/>
    </location>
</feature>
<feature type="transmembrane region" description="Helical" evidence="1">
    <location>
        <begin position="253"/>
        <end position="275"/>
    </location>
</feature>
<feature type="topological domain" description="Extracellular" evidence="1">
    <location>
        <begin position="276"/>
        <end position="309"/>
    </location>
</feature>
<feature type="transmembrane region" description="Helical" evidence="1">
    <location>
        <begin position="310"/>
        <end position="330"/>
    </location>
</feature>
<feature type="topological domain" description="Cytoplasmic" evidence="1">
    <location>
        <begin position="331"/>
        <end position="350"/>
    </location>
</feature>
<feature type="transmembrane region" description="Helical" evidence="1">
    <location>
        <begin position="351"/>
        <end position="371"/>
    </location>
</feature>
<feature type="topological domain" description="Extracellular" evidence="1">
    <location>
        <begin position="372"/>
        <end position="387"/>
    </location>
</feature>
<feature type="transmembrane region" description="Helical" evidence="1">
    <location>
        <begin position="388"/>
        <end position="408"/>
    </location>
</feature>
<feature type="topological domain" description="Cytoplasmic" evidence="1">
    <location>
        <begin position="409"/>
        <end position="458"/>
    </location>
</feature>
<feature type="modified residue" description="Phosphoserine" evidence="6 7">
    <location>
        <position position="444"/>
    </location>
</feature>
<feature type="modified residue" description="Phosphoserine" evidence="6 7">
    <location>
        <position position="448"/>
    </location>
</feature>
<feature type="modified residue" description="Phosphoserine" evidence="6 7">
    <location>
        <position position="450"/>
    </location>
</feature>
<feature type="sequence variant" description="In strain: Ba194, CECT 10233, M5-7A, M5-7B, M7-8D, MMR2-1, MMR2-3, MMW1-12, ORM1-1, Sgu52E, Y-9, YPS396, YPS400, YPS598, YPS600, YPS602, YPS604, YPS606, YPS608 and YPS610.">
    <original>M</original>
    <variation>V</variation>
    <location>
        <position position="19"/>
    </location>
</feature>
<feature type="sequence variant" description="In strain: ATCC 76625 / YPH499, Ba194, Bb32, M1-2A, M2-8, M5-7A, M5-7B, M7-8D, MMR2-1, MMR2-3, MMR2-5, MMW1-15, MMW1-15h2, MMW1-2, MMW1-2h2, MMW1-12, ORM1-1, S288c/ YPH1, Sgu52E, Sgu52F, Y-9, YPS396, YPS400, YPS598, YPS600, YPS602, YPS604, YPS606, YPS608 and YPS610.">
    <original>A</original>
    <variation>T</variation>
    <location>
        <position position="52"/>
    </location>
</feature>
<feature type="sequence variant" description="In strain: Ba194, Bb32, M1-2A, M2-8, M5-7A, M5-7B, M7-8D, MMR2-5, MMW1-15h2, MMW1-2h2, Sgu52E, Sgu52F and Y-9.">
    <original>N</original>
    <variation>S</variation>
    <location>
        <position position="90"/>
    </location>
</feature>
<feature type="sequence variant" description="In strain: Bb32, M1-2A, M2-8, MMR2-5, MMW1-15h2, MMW1-2h2 and Sgu52F.">
    <original>A</original>
    <variation>S</variation>
    <location>
        <position position="122"/>
    </location>
</feature>
<feature type="sequence variant" description="In strain: Ba194, Bb32, M1-2A, M2-8, M5-7A, M5-7B, M7-8D, MMR2-1, MMR2-3, MMR2-5, MMW1-12, MMW1-15h2, MMW1-2h2, ORM1-1, Sgu52E, Sgu52F, Y-9, YPS396, YPS400, YPS598, YPS600, YPS602, YPS604, YPS606, YPS608 and YPS610.">
    <original>P</original>
    <variation>S</variation>
    <location>
        <position position="157"/>
    </location>
</feature>
<feature type="sequence variant" description="In strain: Bb32, M1-2A, M2-8, MMR2-5, MMW1-15h2, MMW1-2h2 and Sgu52F.">
    <original>Y</original>
    <variation>H</variation>
    <location>
        <position position="164"/>
    </location>
</feature>
<feature type="sequence variant" description="In strain: ATCC 76625 / YPH499,MMW1-15, MMW1-2 and S288c / YPH1.">
    <original>A</original>
    <variation>T</variation>
    <location>
        <position position="191"/>
    </location>
</feature>
<feature type="sequence variant" description="In strain: Sgu52F.">
    <original>G</original>
    <variation>E</variation>
    <location>
        <position position="344"/>
    </location>
</feature>
<feature type="sequence variant" description="In strain: ATCC 76625 / YPH499, MMW1-15 and MMW1-2.">
    <original>K</original>
    <variation>R</variation>
    <location>
        <position position="345"/>
    </location>
</feature>
<sequence length="458" mass="52545">MVANWVLALTRQFDPFMFMMVMGVGISSNILYSFPYPARWLRICSYIMFAIACLIFIAVQALQILHLIVYIKEKSFREYFNDFFRNMKHNLFWGTYPMGLVTIINFLGALSKANTTKSPTNARNLMIFVYVLWWYDLAVCLVIAWGISFLIWHDYYPLEGIGNYPSYNIKMASENMKSVLLLDIIPLVVVASSCGTFTMSEIFFHAFNRNIQLITLVICALTWLHAIIFVFILIAIYFWSLYINKIPPMTQVFTLFLLLGPMGQGSFGVLLLTDNIKKYAGKYYPTDNITREQEILTIAVPWCFKILGMVSAMALLAMGYFFTVISVVSILSYYNKKEIENETGKVKRVYTFHKGFWGMTFPMGTMSLGNEELYVQYNQYVPLYAFRVLGTIYGGVCVCWSILCLLCTLHEYSKKMLHAARKSSLFSESGTEKTTVSPYNSIESVEESNSALDFTRLA</sequence>
<keyword id="KW-1003">Cell membrane</keyword>
<keyword id="KW-0472">Membrane</keyword>
<keyword id="KW-0597">Phosphoprotein</keyword>
<keyword id="KW-1185">Reference proteome</keyword>
<keyword id="KW-0812">Transmembrane</keyword>
<keyword id="KW-1133">Transmembrane helix</keyword>
<keyword id="KW-0813">Transport</keyword>